<organism>
    <name type="scientific">Staphylococcus aureus (strain Mu3 / ATCC 700698)</name>
    <dbReference type="NCBI Taxonomy" id="418127"/>
    <lineage>
        <taxon>Bacteria</taxon>
        <taxon>Bacillati</taxon>
        <taxon>Bacillota</taxon>
        <taxon>Bacilli</taxon>
        <taxon>Bacillales</taxon>
        <taxon>Staphylococcaceae</taxon>
        <taxon>Staphylococcus</taxon>
    </lineage>
</organism>
<name>DNAJ_STAA1</name>
<reference key="1">
    <citation type="journal article" date="2008" name="Antimicrob. Agents Chemother.">
        <title>Mutated response regulator graR is responsible for phenotypic conversion of Staphylococcus aureus from heterogeneous vancomycin-intermediate resistance to vancomycin-intermediate resistance.</title>
        <authorList>
            <person name="Neoh H.-M."/>
            <person name="Cui L."/>
            <person name="Yuzawa H."/>
            <person name="Takeuchi F."/>
            <person name="Matsuo M."/>
            <person name="Hiramatsu K."/>
        </authorList>
    </citation>
    <scope>NUCLEOTIDE SEQUENCE [LARGE SCALE GENOMIC DNA]</scope>
    <source>
        <strain>Mu3 / ATCC 700698</strain>
    </source>
</reference>
<evidence type="ECO:0000255" key="1">
    <source>
        <dbReference type="HAMAP-Rule" id="MF_01152"/>
    </source>
</evidence>
<dbReference type="EMBL" id="AP009324">
    <property type="protein sequence ID" value="BAF78449.1"/>
    <property type="molecule type" value="Genomic_DNA"/>
</dbReference>
<dbReference type="RefSeq" id="WP_001119021.1">
    <property type="nucleotide sequence ID" value="NZ_CTYB01000003.1"/>
</dbReference>
<dbReference type="SMR" id="A7X2Y0"/>
<dbReference type="KEGG" id="saw:SAHV_1566"/>
<dbReference type="HOGENOM" id="CLU_017633_0_7_9"/>
<dbReference type="GO" id="GO:0005737">
    <property type="term" value="C:cytoplasm"/>
    <property type="evidence" value="ECO:0007669"/>
    <property type="project" value="UniProtKB-SubCell"/>
</dbReference>
<dbReference type="GO" id="GO:0005524">
    <property type="term" value="F:ATP binding"/>
    <property type="evidence" value="ECO:0007669"/>
    <property type="project" value="InterPro"/>
</dbReference>
<dbReference type="GO" id="GO:0031072">
    <property type="term" value="F:heat shock protein binding"/>
    <property type="evidence" value="ECO:0007669"/>
    <property type="project" value="InterPro"/>
</dbReference>
<dbReference type="GO" id="GO:0051082">
    <property type="term" value="F:unfolded protein binding"/>
    <property type="evidence" value="ECO:0007669"/>
    <property type="project" value="UniProtKB-UniRule"/>
</dbReference>
<dbReference type="GO" id="GO:0008270">
    <property type="term" value="F:zinc ion binding"/>
    <property type="evidence" value="ECO:0007669"/>
    <property type="project" value="UniProtKB-UniRule"/>
</dbReference>
<dbReference type="GO" id="GO:0051085">
    <property type="term" value="P:chaperone cofactor-dependent protein refolding"/>
    <property type="evidence" value="ECO:0007669"/>
    <property type="project" value="TreeGrafter"/>
</dbReference>
<dbReference type="GO" id="GO:0006260">
    <property type="term" value="P:DNA replication"/>
    <property type="evidence" value="ECO:0007669"/>
    <property type="project" value="UniProtKB-KW"/>
</dbReference>
<dbReference type="GO" id="GO:0042026">
    <property type="term" value="P:protein refolding"/>
    <property type="evidence" value="ECO:0007669"/>
    <property type="project" value="TreeGrafter"/>
</dbReference>
<dbReference type="GO" id="GO:0009408">
    <property type="term" value="P:response to heat"/>
    <property type="evidence" value="ECO:0007669"/>
    <property type="project" value="InterPro"/>
</dbReference>
<dbReference type="CDD" id="cd06257">
    <property type="entry name" value="DnaJ"/>
    <property type="match status" value="1"/>
</dbReference>
<dbReference type="CDD" id="cd10747">
    <property type="entry name" value="DnaJ_C"/>
    <property type="match status" value="1"/>
</dbReference>
<dbReference type="CDD" id="cd10719">
    <property type="entry name" value="DnaJ_zf"/>
    <property type="match status" value="1"/>
</dbReference>
<dbReference type="FunFam" id="1.10.287.110:FF:000031">
    <property type="entry name" value="Molecular chaperone DnaJ"/>
    <property type="match status" value="1"/>
</dbReference>
<dbReference type="FunFam" id="2.10.230.10:FF:000002">
    <property type="entry name" value="Molecular chaperone DnaJ"/>
    <property type="match status" value="1"/>
</dbReference>
<dbReference type="FunFam" id="2.60.260.20:FF:000004">
    <property type="entry name" value="Molecular chaperone DnaJ"/>
    <property type="match status" value="1"/>
</dbReference>
<dbReference type="Gene3D" id="1.10.287.110">
    <property type="entry name" value="DnaJ domain"/>
    <property type="match status" value="1"/>
</dbReference>
<dbReference type="Gene3D" id="2.10.230.10">
    <property type="entry name" value="Heat shock protein DnaJ, cysteine-rich domain"/>
    <property type="match status" value="1"/>
</dbReference>
<dbReference type="Gene3D" id="2.60.260.20">
    <property type="entry name" value="Urease metallochaperone UreE, N-terminal domain"/>
    <property type="match status" value="2"/>
</dbReference>
<dbReference type="HAMAP" id="MF_01152">
    <property type="entry name" value="DnaJ"/>
    <property type="match status" value="1"/>
</dbReference>
<dbReference type="InterPro" id="IPR012724">
    <property type="entry name" value="DnaJ"/>
</dbReference>
<dbReference type="InterPro" id="IPR002939">
    <property type="entry name" value="DnaJ_C"/>
</dbReference>
<dbReference type="InterPro" id="IPR001623">
    <property type="entry name" value="DnaJ_domain"/>
</dbReference>
<dbReference type="InterPro" id="IPR018253">
    <property type="entry name" value="DnaJ_domain_CS"/>
</dbReference>
<dbReference type="InterPro" id="IPR008971">
    <property type="entry name" value="HSP40/DnaJ_pept-bd"/>
</dbReference>
<dbReference type="InterPro" id="IPR001305">
    <property type="entry name" value="HSP_DnaJ_Cys-rich_dom"/>
</dbReference>
<dbReference type="InterPro" id="IPR036410">
    <property type="entry name" value="HSP_DnaJ_Cys-rich_dom_sf"/>
</dbReference>
<dbReference type="InterPro" id="IPR036869">
    <property type="entry name" value="J_dom_sf"/>
</dbReference>
<dbReference type="NCBIfam" id="TIGR02349">
    <property type="entry name" value="DnaJ_bact"/>
    <property type="match status" value="1"/>
</dbReference>
<dbReference type="NCBIfam" id="NF008035">
    <property type="entry name" value="PRK10767.1"/>
    <property type="match status" value="1"/>
</dbReference>
<dbReference type="NCBIfam" id="NF010873">
    <property type="entry name" value="PRK14280.1"/>
    <property type="match status" value="1"/>
</dbReference>
<dbReference type="PANTHER" id="PTHR43096:SF48">
    <property type="entry name" value="CHAPERONE PROTEIN DNAJ"/>
    <property type="match status" value="1"/>
</dbReference>
<dbReference type="PANTHER" id="PTHR43096">
    <property type="entry name" value="DNAJ HOMOLOG 1, MITOCHONDRIAL-RELATED"/>
    <property type="match status" value="1"/>
</dbReference>
<dbReference type="Pfam" id="PF00226">
    <property type="entry name" value="DnaJ"/>
    <property type="match status" value="1"/>
</dbReference>
<dbReference type="Pfam" id="PF01556">
    <property type="entry name" value="DnaJ_C"/>
    <property type="match status" value="1"/>
</dbReference>
<dbReference type="Pfam" id="PF00684">
    <property type="entry name" value="DnaJ_CXXCXGXG"/>
    <property type="match status" value="1"/>
</dbReference>
<dbReference type="PRINTS" id="PR00625">
    <property type="entry name" value="JDOMAIN"/>
</dbReference>
<dbReference type="SMART" id="SM00271">
    <property type="entry name" value="DnaJ"/>
    <property type="match status" value="1"/>
</dbReference>
<dbReference type="SUPFAM" id="SSF46565">
    <property type="entry name" value="Chaperone J-domain"/>
    <property type="match status" value="1"/>
</dbReference>
<dbReference type="SUPFAM" id="SSF57938">
    <property type="entry name" value="DnaJ/Hsp40 cysteine-rich domain"/>
    <property type="match status" value="1"/>
</dbReference>
<dbReference type="SUPFAM" id="SSF49493">
    <property type="entry name" value="HSP40/DnaJ peptide-binding domain"/>
    <property type="match status" value="2"/>
</dbReference>
<dbReference type="PROSITE" id="PS00636">
    <property type="entry name" value="DNAJ_1"/>
    <property type="match status" value="1"/>
</dbReference>
<dbReference type="PROSITE" id="PS50076">
    <property type="entry name" value="DNAJ_2"/>
    <property type="match status" value="1"/>
</dbReference>
<dbReference type="PROSITE" id="PS51188">
    <property type="entry name" value="ZF_CR"/>
    <property type="match status" value="1"/>
</dbReference>
<keyword id="KW-0143">Chaperone</keyword>
<keyword id="KW-0963">Cytoplasm</keyword>
<keyword id="KW-0235">DNA replication</keyword>
<keyword id="KW-0479">Metal-binding</keyword>
<keyword id="KW-0677">Repeat</keyword>
<keyword id="KW-0346">Stress response</keyword>
<keyword id="KW-0862">Zinc</keyword>
<keyword id="KW-0863">Zinc-finger</keyword>
<feature type="chain" id="PRO_1000085308" description="Chaperone protein DnaJ">
    <location>
        <begin position="1"/>
        <end position="379"/>
    </location>
</feature>
<feature type="domain" description="J" evidence="1">
    <location>
        <begin position="5"/>
        <end position="69"/>
    </location>
</feature>
<feature type="repeat" description="CXXCXGXG motif">
    <location>
        <begin position="149"/>
        <end position="156"/>
    </location>
</feature>
<feature type="repeat" description="CXXCXGXG motif">
    <location>
        <begin position="166"/>
        <end position="173"/>
    </location>
</feature>
<feature type="repeat" description="CXXCXGXG motif">
    <location>
        <begin position="192"/>
        <end position="199"/>
    </location>
</feature>
<feature type="repeat" description="CXXCXGXG motif">
    <location>
        <begin position="206"/>
        <end position="213"/>
    </location>
</feature>
<feature type="zinc finger region" description="CR-type" evidence="1">
    <location>
        <begin position="136"/>
        <end position="218"/>
    </location>
</feature>
<feature type="binding site" evidence="1">
    <location>
        <position position="149"/>
    </location>
    <ligand>
        <name>Zn(2+)</name>
        <dbReference type="ChEBI" id="CHEBI:29105"/>
        <label>1</label>
    </ligand>
</feature>
<feature type="binding site" evidence="1">
    <location>
        <position position="152"/>
    </location>
    <ligand>
        <name>Zn(2+)</name>
        <dbReference type="ChEBI" id="CHEBI:29105"/>
        <label>1</label>
    </ligand>
</feature>
<feature type="binding site" evidence="1">
    <location>
        <position position="166"/>
    </location>
    <ligand>
        <name>Zn(2+)</name>
        <dbReference type="ChEBI" id="CHEBI:29105"/>
        <label>2</label>
    </ligand>
</feature>
<feature type="binding site" evidence="1">
    <location>
        <position position="169"/>
    </location>
    <ligand>
        <name>Zn(2+)</name>
        <dbReference type="ChEBI" id="CHEBI:29105"/>
        <label>2</label>
    </ligand>
</feature>
<feature type="binding site" evidence="1">
    <location>
        <position position="192"/>
    </location>
    <ligand>
        <name>Zn(2+)</name>
        <dbReference type="ChEBI" id="CHEBI:29105"/>
        <label>2</label>
    </ligand>
</feature>
<feature type="binding site" evidence="1">
    <location>
        <position position="195"/>
    </location>
    <ligand>
        <name>Zn(2+)</name>
        <dbReference type="ChEBI" id="CHEBI:29105"/>
        <label>2</label>
    </ligand>
</feature>
<feature type="binding site" evidence="1">
    <location>
        <position position="206"/>
    </location>
    <ligand>
        <name>Zn(2+)</name>
        <dbReference type="ChEBI" id="CHEBI:29105"/>
        <label>1</label>
    </ligand>
</feature>
<feature type="binding site" evidence="1">
    <location>
        <position position="209"/>
    </location>
    <ligand>
        <name>Zn(2+)</name>
        <dbReference type="ChEBI" id="CHEBI:29105"/>
        <label>1</label>
    </ligand>
</feature>
<gene>
    <name evidence="1" type="primary">dnaJ</name>
    <name type="ordered locus">SAHV_1566</name>
</gene>
<proteinExistence type="inferred from homology"/>
<comment type="function">
    <text evidence="1">Participates actively in the response to hyperosmotic and heat shock by preventing the aggregation of stress-denatured proteins and by disaggregating proteins, also in an autonomous, DnaK-independent fashion. Unfolded proteins bind initially to DnaJ; upon interaction with the DnaJ-bound protein, DnaK hydrolyzes its bound ATP, resulting in the formation of a stable complex. GrpE releases ADP from DnaK; ATP binding to DnaK triggers the release of the substrate protein, thus completing the reaction cycle. Several rounds of ATP-dependent interactions between DnaJ, DnaK and GrpE are required for fully efficient folding. Also involved, together with DnaK and GrpE, in the DNA replication of plasmids through activation of initiation proteins.</text>
</comment>
<comment type="cofactor">
    <cofactor evidence="1">
        <name>Zn(2+)</name>
        <dbReference type="ChEBI" id="CHEBI:29105"/>
    </cofactor>
    <text evidence="1">Binds 2 Zn(2+) ions per monomer.</text>
</comment>
<comment type="subunit">
    <text evidence="1">Homodimer.</text>
</comment>
<comment type="subcellular location">
    <subcellularLocation>
        <location evidence="1">Cytoplasm</location>
    </subcellularLocation>
</comment>
<comment type="domain">
    <text evidence="1">The J domain is necessary and sufficient to stimulate DnaK ATPase activity. Zinc center 1 plays an important role in the autonomous, DnaK-independent chaperone activity of DnaJ. Zinc center 2 is essential for interaction with DnaK and for DnaJ activity.</text>
</comment>
<comment type="similarity">
    <text evidence="1">Belongs to the DnaJ family.</text>
</comment>
<protein>
    <recommendedName>
        <fullName evidence="1">Chaperone protein DnaJ</fullName>
    </recommendedName>
</protein>
<accession>A7X2Y0</accession>
<sequence>MAKRDYYEVLGISKDASKDEIKKAYRKLSKKYHPDINKEEGADEKFKEISEAYEVLSDDNKRASYDQFGHDGPQGFGGQGFNGSDFGGFSGFGGGGFEDIFSSFFGGGRQRDPNAPQKGDDLQYTMTLTFEEAVFGTTKEISIRKDVTCETCHGDGAKPGTSKKTCSYCNGAGHVAVEQNTILGRVRTEQVCPKCNGSGQEFEEACPTCHGKGTENKTVKLEVKVPEGVDNEQQIRLAGEGSPGVNGGPAGDLYVVFRVKPSETFKRDGDDIYYKLNVSFPQAALGDEIKIPTLNNEVMLTIPAGTQTGKQFRLKEKGIKNVHGYGYGDLYVDIKVVTPTKLTDRQKELMKEFAQLNGEEINEQPSNFKDRAKRFFKGE</sequence>